<evidence type="ECO:0000250" key="1">
    <source>
        <dbReference type="UniProtKB" id="Q920N1"/>
    </source>
</evidence>
<evidence type="ECO:0000303" key="2">
    <source>
    </source>
</evidence>
<evidence type="ECO:0000305" key="3"/>
<evidence type="ECO:0000312" key="4">
    <source>
        <dbReference type="HGNC" id="HGNC:34388"/>
    </source>
</evidence>
<gene>
    <name evidence="4" type="primary">CIMAP1B</name>
    <name type="synonym">ODF3B</name>
    <name type="synonym">ODF3L3</name>
</gene>
<keyword id="KW-0025">Alternative splicing</keyword>
<keyword id="KW-0966">Cell projection</keyword>
<keyword id="KW-0969">Cilium</keyword>
<keyword id="KW-0282">Flagellum</keyword>
<keyword id="KW-1267">Proteomics identification</keyword>
<keyword id="KW-1185">Reference proteome</keyword>
<proteinExistence type="evidence at protein level"/>
<name>CMA1B_HUMAN</name>
<sequence>MGSDAWVGLWRPHRPRGPIAAHYGGPGPKYKLPPNTGYALHDPSRPRAPAFTFGARFPTQQTTCGPGPGHLVPARMTVRGTDGAPAYSIYGRPRRSAPFLTPGPGRYFPERAGNATYPSAPRHTIAPRNWGVQAEQQSPGPAAYTVPSLLGPRVIGKVSAPTCSIYGRRAAGSFFEDLSKTPGPCAYQVVSPGVYKSRAPQFTILARTSLPQDNTRKPGPAAYNVDQHRKPRGWSFGIRHSDYLAPLVTDADN</sequence>
<dbReference type="EMBL" id="U62317">
    <property type="status" value="NOT_ANNOTATED_CDS"/>
    <property type="molecule type" value="Genomic_DNA"/>
</dbReference>
<dbReference type="EMBL" id="BC127934">
    <property type="protein sequence ID" value="AAI27935.1"/>
    <property type="molecule type" value="mRNA"/>
</dbReference>
<dbReference type="CCDS" id="CCDS43039.1">
    <molecule id="A8MYP8-1"/>
</dbReference>
<dbReference type="RefSeq" id="NP_001014440.2">
    <molecule id="A8MYP8-1"/>
    <property type="nucleotide sequence ID" value="NM_001014440.4"/>
</dbReference>
<dbReference type="RefSeq" id="XP_047297336.1">
    <molecule id="A8MYP8-1"/>
    <property type="nucleotide sequence ID" value="XM_047441380.1"/>
</dbReference>
<dbReference type="SMR" id="A8MYP8"/>
<dbReference type="BioGRID" id="136932">
    <property type="interactions" value="9"/>
</dbReference>
<dbReference type="FunCoup" id="A8MYP8">
    <property type="interactions" value="48"/>
</dbReference>
<dbReference type="IntAct" id="A8MYP8">
    <property type="interactions" value="8"/>
</dbReference>
<dbReference type="STRING" id="9606.ENSP00000382804"/>
<dbReference type="iPTMnet" id="A8MYP8"/>
<dbReference type="PhosphoSitePlus" id="A8MYP8"/>
<dbReference type="BioMuta" id="ODF3B"/>
<dbReference type="jPOST" id="A8MYP8"/>
<dbReference type="MassIVE" id="A8MYP8"/>
<dbReference type="PaxDb" id="9606-ENSP00000382804"/>
<dbReference type="PeptideAtlas" id="A8MYP8"/>
<dbReference type="ProteomicsDB" id="2415">
    <molecule id="A8MYP8-1"/>
</dbReference>
<dbReference type="ProteomicsDB" id="2416">
    <molecule id="A8MYP8-2"/>
</dbReference>
<dbReference type="Antibodypedia" id="53940">
    <property type="antibodies" value="68 antibodies from 10 providers"/>
</dbReference>
<dbReference type="DNASU" id="440836"/>
<dbReference type="Ensembl" id="ENST00000329363.9">
    <molecule id="A8MYP8-1"/>
    <property type="protein sequence ID" value="ENSP00000382804.2"/>
    <property type="gene ID" value="ENSG00000177989.14"/>
</dbReference>
<dbReference type="Ensembl" id="ENST00000682240.1">
    <molecule id="A8MYP8-1"/>
    <property type="protein sequence ID" value="ENSP00000507825.1"/>
    <property type="gene ID" value="ENSG00000177989.14"/>
</dbReference>
<dbReference type="GeneID" id="440836"/>
<dbReference type="KEGG" id="hsa:440836"/>
<dbReference type="MANE-Select" id="ENST00000329363.9">
    <property type="protein sequence ID" value="ENSP00000382804.2"/>
    <property type="RefSeq nucleotide sequence ID" value="NM_001014440.4"/>
    <property type="RefSeq protein sequence ID" value="NP_001014440.2"/>
</dbReference>
<dbReference type="UCSC" id="uc003bmh.2">
    <molecule id="A8MYP8-1"/>
    <property type="organism name" value="human"/>
</dbReference>
<dbReference type="AGR" id="HGNC:34388"/>
<dbReference type="CTD" id="440836"/>
<dbReference type="DisGeNET" id="440836"/>
<dbReference type="GeneCards" id="CIMAP1B"/>
<dbReference type="HGNC" id="HGNC:34388">
    <property type="gene designation" value="CIMAP1B"/>
</dbReference>
<dbReference type="HPA" id="ENSG00000177989">
    <property type="expression patterns" value="Tissue enhanced (choroid plexus, fallopian tube)"/>
</dbReference>
<dbReference type="neXtProt" id="NX_A8MYP8"/>
<dbReference type="OpenTargets" id="ENSG00000177989"/>
<dbReference type="PharmGKB" id="PA162398386"/>
<dbReference type="VEuPathDB" id="HostDB:ENSG00000177989"/>
<dbReference type="eggNOG" id="ENOG502QUIJ">
    <property type="taxonomic scope" value="Eukaryota"/>
</dbReference>
<dbReference type="GeneTree" id="ENSGT00940000161995"/>
<dbReference type="HOGENOM" id="CLU_088282_1_0_1"/>
<dbReference type="InParanoid" id="A8MYP8"/>
<dbReference type="OMA" id="APGNVME"/>
<dbReference type="PAN-GO" id="A8MYP8">
    <property type="GO annotations" value="1 GO annotation based on evolutionary models"/>
</dbReference>
<dbReference type="PhylomeDB" id="A8MYP8"/>
<dbReference type="TreeFam" id="TF325804"/>
<dbReference type="PathwayCommons" id="A8MYP8"/>
<dbReference type="SignaLink" id="A8MYP8"/>
<dbReference type="BioGRID-ORCS" id="440836">
    <property type="hits" value="16 hits in 1143 CRISPR screens"/>
</dbReference>
<dbReference type="ChiTaRS" id="ODF3B">
    <property type="organism name" value="human"/>
</dbReference>
<dbReference type="GenomeRNAi" id="440836"/>
<dbReference type="Pharos" id="A8MYP8">
    <property type="development level" value="Tbio"/>
</dbReference>
<dbReference type="PRO" id="PR:A8MYP8"/>
<dbReference type="Proteomes" id="UP000005640">
    <property type="component" value="Chromosome 22"/>
</dbReference>
<dbReference type="RNAct" id="A8MYP8">
    <property type="molecule type" value="protein"/>
</dbReference>
<dbReference type="Bgee" id="ENSG00000177989">
    <property type="expression patterns" value="Expressed in right uterine tube and 138 other cell types or tissues"/>
</dbReference>
<dbReference type="ExpressionAtlas" id="A8MYP8">
    <property type="expression patterns" value="baseline and differential"/>
</dbReference>
<dbReference type="GO" id="GO:0005856">
    <property type="term" value="C:cytoskeleton"/>
    <property type="evidence" value="ECO:0000318"/>
    <property type="project" value="GO_Central"/>
</dbReference>
<dbReference type="GO" id="GO:0031514">
    <property type="term" value="C:motile cilium"/>
    <property type="evidence" value="ECO:0007669"/>
    <property type="project" value="UniProtKB-SubCell"/>
</dbReference>
<dbReference type="InterPro" id="IPR051291">
    <property type="entry name" value="CIMAP"/>
</dbReference>
<dbReference type="InterPro" id="IPR010736">
    <property type="entry name" value="SHIPPO-rpt"/>
</dbReference>
<dbReference type="PANTHER" id="PTHR21580:SF19">
    <property type="entry name" value="OUTER DENSE FIBER PROTEIN 3B"/>
    <property type="match status" value="1"/>
</dbReference>
<dbReference type="PANTHER" id="PTHR21580">
    <property type="entry name" value="SHIPPO-1-RELATED"/>
    <property type="match status" value="1"/>
</dbReference>
<dbReference type="Pfam" id="PF07004">
    <property type="entry name" value="SHIPPO-rpt"/>
    <property type="match status" value="6"/>
</dbReference>
<comment type="interaction">
    <interactant intactId="EBI-12010090">
        <id>A8MYP8</id>
    </interactant>
    <interactant intactId="EBI-77797">
        <id>P35609</id>
        <label>ACTN2</label>
    </interactant>
    <organismsDiffer>false</organismsDiffer>
    <experiments>3</experiments>
</comment>
<comment type="interaction">
    <interactant intactId="EBI-12010090">
        <id>A8MYP8</id>
    </interactant>
    <interactant intactId="EBI-2880652">
        <id>Q08043</id>
        <label>ACTN3</label>
    </interactant>
    <organismsDiffer>false</organismsDiffer>
    <experiments>3</experiments>
</comment>
<comment type="interaction">
    <interactant intactId="EBI-12010090">
        <id>A8MYP8</id>
    </interactant>
    <interactant intactId="EBI-741101">
        <id>Q13643</id>
        <label>FHL3</label>
    </interactant>
    <organismsDiffer>false</organismsDiffer>
    <experiments>3</experiments>
</comment>
<comment type="interaction">
    <interactant intactId="EBI-12010090">
        <id>A8MYP8</id>
    </interactant>
    <interactant intactId="EBI-7116203">
        <id>O75031</id>
        <label>HSF2BP</label>
    </interactant>
    <organismsDiffer>false</organismsDiffer>
    <experiments>3</experiments>
</comment>
<comment type="interaction">
    <interactant intactId="EBI-12010090">
        <id>A8MYP8</id>
    </interactant>
    <interactant intactId="EBI-3957694">
        <id>Q9BYR6</id>
        <label>KRTAP3-3</label>
    </interactant>
    <organismsDiffer>false</organismsDiffer>
    <experiments>3</experiments>
</comment>
<comment type="interaction">
    <interactant intactId="EBI-12010090">
        <id>A8MYP8</id>
    </interactant>
    <interactant intactId="EBI-724076">
        <id>Q99750</id>
        <label>MDFI</label>
    </interactant>
    <organismsDiffer>false</organismsDiffer>
    <experiments>3</experiments>
</comment>
<comment type="interaction">
    <interactant intactId="EBI-12010090">
        <id>A8MYP8</id>
    </interactant>
    <interactant intactId="EBI-2340269">
        <id>Q13064</id>
        <label>MKRN3</label>
    </interactant>
    <organismsDiffer>false</organismsDiffer>
    <experiments>3</experiments>
</comment>
<comment type="interaction">
    <interactant intactId="EBI-12010090">
        <id>A8MYP8</id>
    </interactant>
    <interactant intactId="EBI-375617">
        <id>P02549</id>
        <label>SPTA1</label>
    </interactant>
    <organismsDiffer>false</organismsDiffer>
    <experiments>3</experiments>
</comment>
<comment type="subcellular location">
    <subcellularLocation>
        <location evidence="1">Cell projection</location>
        <location evidence="1">Cilium</location>
        <location evidence="1">Flagellum</location>
    </subcellularLocation>
</comment>
<comment type="alternative products">
    <event type="alternative splicing"/>
    <isoform>
        <id>A8MYP8-1</id>
        <name>1</name>
        <sequence type="displayed"/>
    </isoform>
    <isoform>
        <id>A8MYP8-2</id>
        <name>2</name>
        <sequence type="described" ref="VSP_034995 VSP_034996 VSP_034997"/>
    </isoform>
</comment>
<comment type="similarity">
    <text evidence="3">Belongs to the CIMAP family.</text>
</comment>
<organism>
    <name type="scientific">Homo sapiens</name>
    <name type="common">Human</name>
    <dbReference type="NCBI Taxonomy" id="9606"/>
    <lineage>
        <taxon>Eukaryota</taxon>
        <taxon>Metazoa</taxon>
        <taxon>Chordata</taxon>
        <taxon>Craniata</taxon>
        <taxon>Vertebrata</taxon>
        <taxon>Euteleostomi</taxon>
        <taxon>Mammalia</taxon>
        <taxon>Eutheria</taxon>
        <taxon>Euarchontoglires</taxon>
        <taxon>Primates</taxon>
        <taxon>Haplorrhini</taxon>
        <taxon>Catarrhini</taxon>
        <taxon>Hominidae</taxon>
        <taxon>Homo</taxon>
    </lineage>
</organism>
<feature type="chain" id="PRO_0000346440" description="Ciliary microtubule associated protein 1B">
    <location>
        <begin position="1"/>
        <end position="253"/>
    </location>
</feature>
<feature type="repeat" description="STPGR">
    <location>
        <begin position="182"/>
        <end position="207"/>
    </location>
</feature>
<feature type="splice variant" id="VSP_034995" description="In isoform 2." evidence="2">
    <original>MGSDAWVGLWRPHRPRGPIAAHYGGPGPKYKLPPNT</original>
    <variation>MGLGAGPGQTLTRMLP</variation>
    <location>
        <begin position="1"/>
        <end position="36"/>
    </location>
</feature>
<feature type="splice variant" id="VSP_034996" description="In isoform 2." evidence="2">
    <original>RYFPERAGNATYPSAPRHTIAPRN</original>
    <variation>QDPRAPGHPNAELPPGRPTWEPPT</variation>
    <location>
        <begin position="106"/>
        <end position="129"/>
    </location>
</feature>
<feature type="splice variant" id="VSP_034997" description="In isoform 2." evidence="2">
    <location>
        <begin position="130"/>
        <end position="253"/>
    </location>
</feature>
<reference key="1">
    <citation type="journal article" date="1999" name="Nature">
        <title>The DNA sequence of human chromosome 22.</title>
        <authorList>
            <person name="Dunham I."/>
            <person name="Hunt A.R."/>
            <person name="Collins J.E."/>
            <person name="Bruskiewich R."/>
            <person name="Beare D.M."/>
            <person name="Clamp M."/>
            <person name="Smink L.J."/>
            <person name="Ainscough R."/>
            <person name="Almeida J.P."/>
            <person name="Babbage A.K."/>
            <person name="Bagguley C."/>
            <person name="Bailey J."/>
            <person name="Barlow K.F."/>
            <person name="Bates K.N."/>
            <person name="Beasley O.P."/>
            <person name="Bird C.P."/>
            <person name="Blakey S.E."/>
            <person name="Bridgeman A.M."/>
            <person name="Buck D."/>
            <person name="Burgess J."/>
            <person name="Burrill W.D."/>
            <person name="Burton J."/>
            <person name="Carder C."/>
            <person name="Carter N.P."/>
            <person name="Chen Y."/>
            <person name="Clark G."/>
            <person name="Clegg S.M."/>
            <person name="Cobley V.E."/>
            <person name="Cole C.G."/>
            <person name="Collier R.E."/>
            <person name="Connor R."/>
            <person name="Conroy D."/>
            <person name="Corby N.R."/>
            <person name="Coville G.J."/>
            <person name="Cox A.V."/>
            <person name="Davis J."/>
            <person name="Dawson E."/>
            <person name="Dhami P.D."/>
            <person name="Dockree C."/>
            <person name="Dodsworth S.J."/>
            <person name="Durbin R.M."/>
            <person name="Ellington A.G."/>
            <person name="Evans K.L."/>
            <person name="Fey J.M."/>
            <person name="Fleming K."/>
            <person name="French L."/>
            <person name="Garner A.A."/>
            <person name="Gilbert J.G.R."/>
            <person name="Goward M.E."/>
            <person name="Grafham D.V."/>
            <person name="Griffiths M.N.D."/>
            <person name="Hall C."/>
            <person name="Hall R.E."/>
            <person name="Hall-Tamlyn G."/>
            <person name="Heathcott R.W."/>
            <person name="Ho S."/>
            <person name="Holmes S."/>
            <person name="Hunt S.E."/>
            <person name="Jones M.C."/>
            <person name="Kershaw J."/>
            <person name="Kimberley A.M."/>
            <person name="King A."/>
            <person name="Laird G.K."/>
            <person name="Langford C.F."/>
            <person name="Leversha M.A."/>
            <person name="Lloyd C."/>
            <person name="Lloyd D.M."/>
            <person name="Martyn I.D."/>
            <person name="Mashreghi-Mohammadi M."/>
            <person name="Matthews L.H."/>
            <person name="Mccann O.T."/>
            <person name="Mcclay J."/>
            <person name="Mclaren S."/>
            <person name="McMurray A.A."/>
            <person name="Milne S.A."/>
            <person name="Mortimore B.J."/>
            <person name="Odell C.N."/>
            <person name="Pavitt R."/>
            <person name="Pearce A.V."/>
            <person name="Pearson D."/>
            <person name="Phillimore B.J.C.T."/>
            <person name="Phillips S.H."/>
            <person name="Plumb R.W."/>
            <person name="Ramsay H."/>
            <person name="Ramsey Y."/>
            <person name="Rogers L."/>
            <person name="Ross M.T."/>
            <person name="Scott C.E."/>
            <person name="Sehra H.K."/>
            <person name="Skuce C.D."/>
            <person name="Smalley S."/>
            <person name="Smith M.L."/>
            <person name="Soderlund C."/>
            <person name="Spragon L."/>
            <person name="Steward C.A."/>
            <person name="Sulston J.E."/>
            <person name="Swann R.M."/>
            <person name="Vaudin M."/>
            <person name="Wall M."/>
            <person name="Wallis J.M."/>
            <person name="Whiteley M.N."/>
            <person name="Willey D.L."/>
            <person name="Williams L."/>
            <person name="Williams S.A."/>
            <person name="Williamson H."/>
            <person name="Wilmer T.E."/>
            <person name="Wilming L."/>
            <person name="Wright C.L."/>
            <person name="Hubbard T."/>
            <person name="Bentley D.R."/>
            <person name="Beck S."/>
            <person name="Rogers J."/>
            <person name="Shimizu N."/>
            <person name="Minoshima S."/>
            <person name="Kawasaki K."/>
            <person name="Sasaki T."/>
            <person name="Asakawa S."/>
            <person name="Kudoh J."/>
            <person name="Shintani A."/>
            <person name="Shibuya K."/>
            <person name="Yoshizaki Y."/>
            <person name="Aoki N."/>
            <person name="Mitsuyama S."/>
            <person name="Roe B.A."/>
            <person name="Chen F."/>
            <person name="Chu L."/>
            <person name="Crabtree J."/>
            <person name="Deschamps S."/>
            <person name="Do A."/>
            <person name="Do T."/>
            <person name="Dorman A."/>
            <person name="Fang F."/>
            <person name="Fu Y."/>
            <person name="Hu P."/>
            <person name="Hua A."/>
            <person name="Kenton S."/>
            <person name="Lai H."/>
            <person name="Lao H.I."/>
            <person name="Lewis J."/>
            <person name="Lewis S."/>
            <person name="Lin S.-P."/>
            <person name="Loh P."/>
            <person name="Malaj E."/>
            <person name="Nguyen T."/>
            <person name="Pan H."/>
            <person name="Phan S."/>
            <person name="Qi S."/>
            <person name="Qian Y."/>
            <person name="Ray L."/>
            <person name="Ren Q."/>
            <person name="Shaull S."/>
            <person name="Sloan D."/>
            <person name="Song L."/>
            <person name="Wang Q."/>
            <person name="Wang Y."/>
            <person name="Wang Z."/>
            <person name="White J."/>
            <person name="Willingham D."/>
            <person name="Wu H."/>
            <person name="Yao Z."/>
            <person name="Zhan M."/>
            <person name="Zhang G."/>
            <person name="Chissoe S."/>
            <person name="Murray J."/>
            <person name="Miller N."/>
            <person name="Minx P."/>
            <person name="Fulton R."/>
            <person name="Johnson D."/>
            <person name="Bemis G."/>
            <person name="Bentley D."/>
            <person name="Bradshaw H."/>
            <person name="Bourne S."/>
            <person name="Cordes M."/>
            <person name="Du Z."/>
            <person name="Fulton L."/>
            <person name="Goela D."/>
            <person name="Graves T."/>
            <person name="Hawkins J."/>
            <person name="Hinds K."/>
            <person name="Kemp K."/>
            <person name="Latreille P."/>
            <person name="Layman D."/>
            <person name="Ozersky P."/>
            <person name="Rohlfing T."/>
            <person name="Scheet P."/>
            <person name="Walker C."/>
            <person name="Wamsley A."/>
            <person name="Wohldmann P."/>
            <person name="Pepin K."/>
            <person name="Nelson J."/>
            <person name="Korf I."/>
            <person name="Bedell J.A."/>
            <person name="Hillier L.W."/>
            <person name="Mardis E."/>
            <person name="Waterston R."/>
            <person name="Wilson R."/>
            <person name="Emanuel B.S."/>
            <person name="Shaikh T."/>
            <person name="Kurahashi H."/>
            <person name="Saitta S."/>
            <person name="Budarf M.L."/>
            <person name="McDermid H.E."/>
            <person name="Johnson A."/>
            <person name="Wong A.C.C."/>
            <person name="Morrow B.E."/>
            <person name="Edelmann L."/>
            <person name="Kim U.J."/>
            <person name="Shizuya H."/>
            <person name="Simon M.I."/>
            <person name="Dumanski J.P."/>
            <person name="Peyrard M."/>
            <person name="Kedra D."/>
            <person name="Seroussi E."/>
            <person name="Fransson I."/>
            <person name="Tapia I."/>
            <person name="Bruder C.E."/>
            <person name="O'Brien K.P."/>
            <person name="Wilkinson P."/>
            <person name="Bodenteich A."/>
            <person name="Hartman K."/>
            <person name="Hu X."/>
            <person name="Khan A.S."/>
            <person name="Lane L."/>
            <person name="Tilahun Y."/>
            <person name="Wright H."/>
        </authorList>
    </citation>
    <scope>NUCLEOTIDE SEQUENCE [LARGE SCALE GENOMIC DNA]</scope>
</reference>
<reference key="2">
    <citation type="journal article" date="2004" name="Genome Res.">
        <title>The status, quality, and expansion of the NIH full-length cDNA project: the Mammalian Gene Collection (MGC).</title>
        <authorList>
            <consortium name="The MGC Project Team"/>
        </authorList>
    </citation>
    <scope>NUCLEOTIDE SEQUENCE [LARGE SCALE MRNA] (ISOFORM 2)</scope>
</reference>
<protein>
    <recommendedName>
        <fullName evidence="3">Ciliary microtubule associated protein 1B</fullName>
    </recommendedName>
    <alternativeName>
        <fullName>Outer dense fiber protein 3-like protein 3</fullName>
    </alternativeName>
    <alternativeName>
        <fullName>Outer dense fiber protein 3B</fullName>
    </alternativeName>
</protein>
<accession>A8MYP8</accession>
<accession>A0PK18</accession>